<organism>
    <name type="scientific">Oryza sativa subsp. japonica</name>
    <name type="common">Rice</name>
    <dbReference type="NCBI Taxonomy" id="39947"/>
    <lineage>
        <taxon>Eukaryota</taxon>
        <taxon>Viridiplantae</taxon>
        <taxon>Streptophyta</taxon>
        <taxon>Embryophyta</taxon>
        <taxon>Tracheophyta</taxon>
        <taxon>Spermatophyta</taxon>
        <taxon>Magnoliopsida</taxon>
        <taxon>Liliopsida</taxon>
        <taxon>Poales</taxon>
        <taxon>Poaceae</taxon>
        <taxon>BOP clade</taxon>
        <taxon>Oryzoideae</taxon>
        <taxon>Oryzeae</taxon>
        <taxon>Oryzinae</taxon>
        <taxon>Oryza</taxon>
        <taxon>Oryza sativa</taxon>
    </lineage>
</organism>
<reference key="1">
    <citation type="journal article" date="2002" name="Plant Physiol.">
        <title>Inventory and functional characterization of the HAK potassium transporters of rice.</title>
        <authorList>
            <person name="Banuelos M.A."/>
            <person name="Garciadeblas B."/>
            <person name="Cubero B."/>
            <person name="Rodriguez-Navarro A."/>
        </authorList>
    </citation>
    <scope>NUCLEOTIDE SEQUENCE [GENOMIC DNA]</scope>
    <scope>NOMENCLATURE</scope>
    <source>
        <strain>cv. Nipponbare</strain>
    </source>
</reference>
<reference key="2">
    <citation type="journal article" date="2005" name="Nature">
        <title>The map-based sequence of the rice genome.</title>
        <authorList>
            <consortium name="International rice genome sequencing project (IRGSP)"/>
        </authorList>
    </citation>
    <scope>NUCLEOTIDE SEQUENCE [LARGE SCALE GENOMIC DNA]</scope>
    <source>
        <strain>cv. Nipponbare</strain>
    </source>
</reference>
<reference key="3">
    <citation type="journal article" date="2008" name="Nucleic Acids Res.">
        <title>The rice annotation project database (RAP-DB): 2008 update.</title>
        <authorList>
            <consortium name="The rice annotation project (RAP)"/>
        </authorList>
    </citation>
    <scope>GENOME REANNOTATION</scope>
    <source>
        <strain>cv. Nipponbare</strain>
    </source>
</reference>
<reference key="4">
    <citation type="journal article" date="2013" name="Rice">
        <title>Improvement of the Oryza sativa Nipponbare reference genome using next generation sequence and optical map data.</title>
        <authorList>
            <person name="Kawahara Y."/>
            <person name="de la Bastide M."/>
            <person name="Hamilton J.P."/>
            <person name="Kanamori H."/>
            <person name="McCombie W.R."/>
            <person name="Ouyang S."/>
            <person name="Schwartz D.C."/>
            <person name="Tanaka T."/>
            <person name="Wu J."/>
            <person name="Zhou S."/>
            <person name="Childs K.L."/>
            <person name="Davidson R.M."/>
            <person name="Lin H."/>
            <person name="Quesada-Ocampo L."/>
            <person name="Vaillancourt B."/>
            <person name="Sakai H."/>
            <person name="Lee S.S."/>
            <person name="Kim J."/>
            <person name="Numa H."/>
            <person name="Itoh T."/>
            <person name="Buell C.R."/>
            <person name="Matsumoto T."/>
        </authorList>
    </citation>
    <scope>GENOME REANNOTATION</scope>
    <source>
        <strain>cv. Nipponbare</strain>
    </source>
</reference>
<reference key="5">
    <citation type="journal article" date="2003" name="Science">
        <title>Collection, mapping, and annotation of over 28,000 cDNA clones from japonica rice.</title>
        <authorList>
            <consortium name="The rice full-length cDNA consortium"/>
        </authorList>
    </citation>
    <scope>NUCLEOTIDE SEQUENCE [LARGE SCALE MRNA]</scope>
    <source>
        <strain>cv. Nipponbare</strain>
    </source>
</reference>
<reference key="6">
    <citation type="journal article" date="2009" name="J. Genet. Genomics">
        <title>Molecular evolution and functional divergence of HAK potassium transporter gene family in rice (Oryza sativa L.).</title>
        <authorList>
            <person name="Yang Z."/>
            <person name="Gao Q."/>
            <person name="Sun C."/>
            <person name="Li W."/>
            <person name="Gu S."/>
            <person name="Xu C."/>
        </authorList>
    </citation>
    <scope>GENE FAMILY</scope>
</reference>
<dbReference type="EMBL" id="AJ427978">
    <property type="protein sequence ID" value="CAD20999.1"/>
    <property type="molecule type" value="Genomic_DNA"/>
</dbReference>
<dbReference type="EMBL" id="AP003757">
    <property type="protein sequence ID" value="BAC79545.1"/>
    <property type="molecule type" value="Genomic_DNA"/>
</dbReference>
<dbReference type="EMBL" id="AP008213">
    <property type="protein sequence ID" value="BAF22551.1"/>
    <property type="molecule type" value="Genomic_DNA"/>
</dbReference>
<dbReference type="EMBL" id="AP014963">
    <property type="protein sequence ID" value="BAT03222.1"/>
    <property type="molecule type" value="Genomic_DNA"/>
</dbReference>
<dbReference type="EMBL" id="AK070738">
    <property type="status" value="NOT_ANNOTATED_CDS"/>
    <property type="molecule type" value="mRNA"/>
</dbReference>
<dbReference type="RefSeq" id="XP_015647605.1">
    <property type="nucleotide sequence ID" value="XM_015792119.1"/>
</dbReference>
<dbReference type="FunCoup" id="Q7XIV8">
    <property type="interactions" value="79"/>
</dbReference>
<dbReference type="STRING" id="39947.Q7XIV8"/>
<dbReference type="GlyCosmos" id="Q7XIV8">
    <property type="glycosylation" value="2 sites, No reported glycans"/>
</dbReference>
<dbReference type="PaxDb" id="39947-Q7XIV8"/>
<dbReference type="EnsemblPlants" id="Os07t0679000-01">
    <property type="protein sequence ID" value="Os07t0679000-01"/>
    <property type="gene ID" value="Os07g0679000"/>
</dbReference>
<dbReference type="Gramene" id="Os07t0679000-01">
    <property type="protein sequence ID" value="Os07t0679000-01"/>
    <property type="gene ID" value="Os07g0679000"/>
</dbReference>
<dbReference type="KEGG" id="dosa:Os07g0679000"/>
<dbReference type="eggNOG" id="ENOG502QPSA">
    <property type="taxonomic scope" value="Eukaryota"/>
</dbReference>
<dbReference type="HOGENOM" id="CLU_008142_2_0_1"/>
<dbReference type="InParanoid" id="Q7XIV8"/>
<dbReference type="OMA" id="GWWHERD"/>
<dbReference type="OrthoDB" id="504708at2759"/>
<dbReference type="Proteomes" id="UP000000763">
    <property type="component" value="Chromosome 7"/>
</dbReference>
<dbReference type="Proteomes" id="UP000059680">
    <property type="component" value="Chromosome 7"/>
</dbReference>
<dbReference type="GO" id="GO:0016020">
    <property type="term" value="C:membrane"/>
    <property type="evidence" value="ECO:0000318"/>
    <property type="project" value="GO_Central"/>
</dbReference>
<dbReference type="GO" id="GO:0015079">
    <property type="term" value="F:potassium ion transmembrane transporter activity"/>
    <property type="evidence" value="ECO:0000318"/>
    <property type="project" value="GO_Central"/>
</dbReference>
<dbReference type="GO" id="GO:0006813">
    <property type="term" value="P:potassium ion transport"/>
    <property type="evidence" value="ECO:0000318"/>
    <property type="project" value="GO_Central"/>
</dbReference>
<dbReference type="InterPro" id="IPR003855">
    <property type="entry name" value="K+_transporter"/>
</dbReference>
<dbReference type="InterPro" id="IPR053952">
    <property type="entry name" value="K_trans_C"/>
</dbReference>
<dbReference type="InterPro" id="IPR053951">
    <property type="entry name" value="K_trans_N"/>
</dbReference>
<dbReference type="NCBIfam" id="TIGR00794">
    <property type="entry name" value="kup"/>
    <property type="match status" value="1"/>
</dbReference>
<dbReference type="PANTHER" id="PTHR30540">
    <property type="entry name" value="OSMOTIC STRESS POTASSIUM TRANSPORTER"/>
    <property type="match status" value="1"/>
</dbReference>
<dbReference type="PANTHER" id="PTHR30540:SF142">
    <property type="entry name" value="POTASSIUM TRANSPORTER 9-RELATED"/>
    <property type="match status" value="1"/>
</dbReference>
<dbReference type="Pfam" id="PF02705">
    <property type="entry name" value="K_trans"/>
    <property type="match status" value="1"/>
</dbReference>
<dbReference type="Pfam" id="PF22776">
    <property type="entry name" value="K_trans_C"/>
    <property type="match status" value="1"/>
</dbReference>
<name>HAK9_ORYSJ</name>
<keyword id="KW-0325">Glycoprotein</keyword>
<keyword id="KW-0406">Ion transport</keyword>
<keyword id="KW-0472">Membrane</keyword>
<keyword id="KW-0630">Potassium</keyword>
<keyword id="KW-0633">Potassium transport</keyword>
<keyword id="KW-1185">Reference proteome</keyword>
<keyword id="KW-0812">Transmembrane</keyword>
<keyword id="KW-1133">Transmembrane helix</keyword>
<keyword id="KW-0813">Transport</keyword>
<feature type="chain" id="PRO_0000209096" description="Probable potassium transporter 9">
    <location>
        <begin position="1"/>
        <end position="788"/>
    </location>
</feature>
<feature type="topological domain" description="Cytoplasmic" evidence="2">
    <location>
        <begin position="1"/>
        <end position="21"/>
    </location>
</feature>
<feature type="transmembrane region" description="Helical; Name=1" evidence="2">
    <location>
        <begin position="22"/>
        <end position="42"/>
    </location>
</feature>
<feature type="topological domain" description="Extracellular" evidence="2">
    <location>
        <begin position="43"/>
        <end position="59"/>
    </location>
</feature>
<feature type="transmembrane region" description="Helical; Name=2" evidence="2">
    <location>
        <begin position="60"/>
        <end position="80"/>
    </location>
</feature>
<feature type="topological domain" description="Cytoplasmic" evidence="2">
    <location>
        <begin position="81"/>
        <end position="151"/>
    </location>
</feature>
<feature type="transmembrane region" description="Helical; Name=3" evidence="2">
    <location>
        <begin position="152"/>
        <end position="172"/>
    </location>
</feature>
<feature type="topological domain" description="Extracellular" evidence="2">
    <location>
        <begin position="173"/>
        <end position="191"/>
    </location>
</feature>
<feature type="transmembrane region" description="Helical; Name=4" evidence="2">
    <location>
        <begin position="192"/>
        <end position="212"/>
    </location>
</feature>
<feature type="topological domain" description="Cytoplasmic" evidence="2">
    <location>
        <begin position="213"/>
        <end position="215"/>
    </location>
</feature>
<feature type="transmembrane region" description="Helical; Name=5" evidence="2">
    <location>
        <begin position="216"/>
        <end position="236"/>
    </location>
</feature>
<feature type="topological domain" description="Extracellular" evidence="2">
    <location>
        <begin position="237"/>
        <end position="264"/>
    </location>
</feature>
<feature type="transmembrane region" description="Helical; Name=6" evidence="2">
    <location>
        <begin position="265"/>
        <end position="285"/>
    </location>
</feature>
<feature type="topological domain" description="Cytoplasmic" evidence="2">
    <location>
        <begin position="286"/>
        <end position="292"/>
    </location>
</feature>
<feature type="transmembrane region" description="Helical; Name=7" evidence="2">
    <location>
        <begin position="293"/>
        <end position="313"/>
    </location>
</feature>
<feature type="topological domain" description="Extracellular" evidence="2">
    <location>
        <begin position="314"/>
        <end position="343"/>
    </location>
</feature>
<feature type="transmembrane region" description="Helical; Name=8" evidence="2">
    <location>
        <begin position="344"/>
        <end position="364"/>
    </location>
</feature>
<feature type="topological domain" description="Cytoplasmic" evidence="2">
    <location>
        <begin position="365"/>
        <end position="391"/>
    </location>
</feature>
<feature type="transmembrane region" description="Helical; Name=9" evidence="2">
    <location>
        <begin position="392"/>
        <end position="412"/>
    </location>
</feature>
<feature type="topological domain" description="Extracellular" evidence="2">
    <location>
        <begin position="413"/>
        <end position="422"/>
    </location>
</feature>
<feature type="transmembrane region" description="Helical; Name=10" evidence="2">
    <location>
        <begin position="423"/>
        <end position="443"/>
    </location>
</feature>
<feature type="topological domain" description="Cytoplasmic" evidence="2">
    <location>
        <begin position="444"/>
        <end position="451"/>
    </location>
</feature>
<feature type="transmembrane region" description="Helical; Name=11" evidence="2">
    <location>
        <begin position="452"/>
        <end position="472"/>
    </location>
</feature>
<feature type="topological domain" description="Extracellular" evidence="2">
    <location>
        <begin position="473"/>
        <end position="476"/>
    </location>
</feature>
<feature type="transmembrane region" description="Helical; Name=12" evidence="2">
    <location>
        <begin position="477"/>
        <end position="497"/>
    </location>
</feature>
<feature type="topological domain" description="Cytoplasmic" evidence="2">
    <location>
        <begin position="498"/>
        <end position="788"/>
    </location>
</feature>
<feature type="glycosylation site" description="N-linked (GlcNAc...) asparagine" evidence="2">
    <location>
        <position position="325"/>
    </location>
</feature>
<feature type="glycosylation site" description="N-linked (GlcNAc...) asparagine" evidence="2">
    <location>
        <position position="420"/>
    </location>
</feature>
<feature type="sequence conflict" description="In Ref. 5; AK070738." evidence="3" ref="5">
    <original>L</original>
    <variation>Q</variation>
    <location>
        <position position="720"/>
    </location>
</feature>
<protein>
    <recommendedName>
        <fullName>Probable potassium transporter 9</fullName>
    </recommendedName>
    <alternativeName>
        <fullName>OsHAK9</fullName>
    </alternativeName>
</protein>
<evidence type="ECO:0000250" key="1"/>
<evidence type="ECO:0000255" key="2"/>
<evidence type="ECO:0000305" key="3"/>
<comment type="function">
    <text evidence="1">High-affinity potassium transporter.</text>
</comment>
<comment type="subcellular location">
    <subcellularLocation>
        <location evidence="3">Membrane</location>
        <topology evidence="3">Multi-pass membrane protein</topology>
    </subcellularLocation>
</comment>
<comment type="similarity">
    <text evidence="3">Belongs to the HAK/KUP transporter (TC 2.A.72.3) family.</text>
</comment>
<proteinExistence type="evidence at transcript level"/>
<gene>
    <name type="primary">HAK9</name>
    <name type="ordered locus">Os07g0679000</name>
    <name type="ordered locus">LOC_Os07g48130</name>
    <name type="ORF">OJ1409_C08.19</name>
</gene>
<sequence length="788" mass="87482">MDPEFGRGMAPRKREPWRTTLLLAYQSLGVVYGDLSISPLYVYKSTFAEDITHSESNEEIFGVLSFVFWTLTLIPLIKYVSIVLRADDNGEGGTFALYSLICRHANVSLLPNRQVADEELSTYKLEYPPEVANRSRIKEWLEKHKTLQTALLIMVMIGTCMVIGDGVLTPAISVFSAVSGLELSLSRDQHEYAVIPITCVILVFLFALQHYGTHRVGFLFAPIVLAWLICMSMLGLYNIIHWNPQVYRALNPYYMLKFLRKTKKSGWMSLGGILLCMTGSEAMFADLGHFSYSAIQLAFTTLVYPALILGYMGQAAYLSKHHTLNSTYQIGYYISVPESVRWPVLVLAILASVVGSQAIISGTFSIINQSQSLSCFPRVKVVHTSENIHGQIYIPEINWLLMVLCIAVTVGFRDTKHMGNASGLAVITVMLVTTCLTSLVIMLCWHRSPALALVFFLFFGSIEVLYFSASLIKFREGAWLPIMLALILMAVMFIWHHTTIKKYEFDLHNKVTLEWLLALGDKLGMVRVPGIGLVYTDLTSGVPANFSRFVTNLPAFHRVLVFVCVKSVPVPHVLPAERYLVGRVGPAGHRSYRCIVRYGYRDVHQDVDSFEAELVESLATFIKLDALYHRCSDAGSGSEQLDDGRYERENALTVIGTNPLRRCLSYEASHDGVSSVDAARSPNGIVEVPAAAAAAPVTKKVRFVVEAASPEVEKGVVEELQELCEAREAGTAFILGHSHVQTKPGSSLLKKLAVGVGYNFLRRNCRGPDVVLRVPPASLLEVGMVYVL</sequence>
<accession>Q7XIV8</accession>
<accession>A0A0P0XA41</accession>
<accession>Q0D3M2</accession>
<accession>Q8VXB4</accession>